<comment type="function">
    <text evidence="1">Encapsidates the negative strand viral RNA, protecting it from nucleases. The encapsidated genomic RNA is termed the ribonucleoprotein (RNP) and serves as template for transcription and replication. The RNP needs to be localized in the host nucleus to start an infectious cycle, but is too large to diffuse through the nuclear pore complex. NP comprises at least 2 nuclear localization signals that are responsible for the active RNP import into the nucleus through cellular importin alpha/beta pathway. Later in the infection, nclear export of RNPs are mediated through viral proteins NEP interacting with M1 which binds nucleoproteins. It is possible that nucleoprotein binds directly host exportin-1/XPO1 and plays an active role in RNPs nuclear export. M1 interaction with RNP seems to hide nucleoprotein's nuclear localization signals. Soon after a virion infects a new cell, M1 dissociates from the RNP under acidification of the virion driven by M2 protein. Dissociation of M1 from RNP unmasks nucleoprotein's nuclear localization signals, targeting the RNP to the nucleus.</text>
</comment>
<comment type="subunit">
    <text evidence="1">Homomultimerizes to form the nucleocapsid. May bind host exportin-1/XPO1. Binds to viral genomic RNA. Protein-RNA contacts are mediated by a combination of electrostatic interactions between positively charged residues and the phosphate backbone and planar interactions between aromatic side chains and bases.</text>
</comment>
<comment type="subcellular location">
    <subcellularLocation>
        <location evidence="1">Virion</location>
    </subcellularLocation>
    <subcellularLocation>
        <location evidence="1">Host nucleus</location>
    </subcellularLocation>
</comment>
<comment type="PTM">
    <text evidence="1">Late in virus-infected cells, may be cleaved from a 56-kDa protein to a 53-kDa protein by a cellular caspase. This cleavage might be a marker for the onset of apoptosis in infected cells or have a specific function in virus host interaction.</text>
</comment>
<comment type="similarity">
    <text evidence="1">Belongs to the influenza viruses nucleoprotein family.</text>
</comment>
<sequence>MASQGTKRSYEQMETDGERQNATEIRASVGKMIDGIGRFYIQMCTELKLSDYEGRLIQNSLTIERMVLSAFDERRNRYLEEHPSAGKDPKKTGGPIYKRVDGKWMRELVLYDKEEIRRIWRQANNGDDATAGLTHMMIWHSNLNDTTYQRTRALVRTGMDPRMCSLMQGSTLPRRSGAAGAAVKGVGTMVMELIRMIKRGINDRNFWRGENGRKTRSAYERMCNILKGKFQTAAQRAMMDQVRESRNPGNAEIEDLIFSARSALILRGSVAHKSCLPACVYGPAVASGYDFEKEGYSLVGIDPFKLLQNSQVYSLIRPNENPAHKSQLVWMACHSAAFEDLRLLSFIRGTKVSPRGKLSTRGVQIASNENMDTMESSTLELRSRYWAIRTRSGGNTNQQRASAGQISVQPAFSVQRNLPFDKSTIMAAFTGNTEGRTSDMRAEIIRMMEGAKPEEVSFRGRGVFELSDEKATNPVVPSFDMSNEGSYFFGDNAEEYDN</sequence>
<keyword id="KW-0167">Capsid protein</keyword>
<keyword id="KW-1139">Helical capsid protein</keyword>
<keyword id="KW-1048">Host nucleus</keyword>
<keyword id="KW-0945">Host-virus interaction</keyword>
<keyword id="KW-0687">Ribonucleoprotein</keyword>
<keyword id="KW-0694">RNA-binding</keyword>
<keyword id="KW-0543">Viral nucleoprotein</keyword>
<keyword id="KW-1163">Viral penetration into host nucleus</keyword>
<keyword id="KW-0946">Virion</keyword>
<keyword id="KW-1160">Virus entry into host cell</keyword>
<protein>
    <recommendedName>
        <fullName evidence="1">Nucleoprotein</fullName>
    </recommendedName>
    <alternativeName>
        <fullName evidence="1">Nucleocapsid protein</fullName>
        <shortName evidence="1">Protein N</shortName>
    </alternativeName>
</protein>
<accession>Q08033</accession>
<accession>Q2RFA2</accession>
<organism>
    <name type="scientific">Influenza A virus (strain A/Memphis/110/1976 H3N2)</name>
    <dbReference type="NCBI Taxonomy" id="383581"/>
    <lineage>
        <taxon>Viruses</taxon>
        <taxon>Riboviria</taxon>
        <taxon>Orthornavirae</taxon>
        <taxon>Negarnaviricota</taxon>
        <taxon>Polyploviricotina</taxon>
        <taxon>Insthoviricetes</taxon>
        <taxon>Articulavirales</taxon>
        <taxon>Orthomyxoviridae</taxon>
        <taxon>Alphainfluenzavirus</taxon>
        <taxon>Alphainfluenzavirus influenzae</taxon>
        <taxon>Influenza A virus</taxon>
    </lineage>
</organism>
<dbReference type="EMBL" id="L07349">
    <property type="protein sequence ID" value="AAA51502.1"/>
    <property type="molecule type" value="Genomic_RNA"/>
</dbReference>
<dbReference type="EMBL" id="CY006838">
    <property type="protein sequence ID" value="ABC02270.1"/>
    <property type="molecule type" value="Genomic_RNA"/>
</dbReference>
<dbReference type="SMR" id="Q08033"/>
<dbReference type="PRO" id="PR:Q08033"/>
<dbReference type="Proteomes" id="UP000007792">
    <property type="component" value="Genome"/>
</dbReference>
<dbReference type="GO" id="GO:0019029">
    <property type="term" value="C:helical viral capsid"/>
    <property type="evidence" value="ECO:0007669"/>
    <property type="project" value="UniProtKB-UniRule"/>
</dbReference>
<dbReference type="GO" id="GO:0043657">
    <property type="term" value="C:host cell"/>
    <property type="evidence" value="ECO:0007669"/>
    <property type="project" value="GOC"/>
</dbReference>
<dbReference type="GO" id="GO:0042025">
    <property type="term" value="C:host cell nucleus"/>
    <property type="evidence" value="ECO:0007669"/>
    <property type="project" value="UniProtKB-SubCell"/>
</dbReference>
<dbReference type="GO" id="GO:1990904">
    <property type="term" value="C:ribonucleoprotein complex"/>
    <property type="evidence" value="ECO:0007669"/>
    <property type="project" value="UniProtKB-KW"/>
</dbReference>
<dbReference type="GO" id="GO:0019013">
    <property type="term" value="C:viral nucleocapsid"/>
    <property type="evidence" value="ECO:0007669"/>
    <property type="project" value="UniProtKB-UniRule"/>
</dbReference>
<dbReference type="GO" id="GO:0003723">
    <property type="term" value="F:RNA binding"/>
    <property type="evidence" value="ECO:0007669"/>
    <property type="project" value="UniProtKB-UniRule"/>
</dbReference>
<dbReference type="GO" id="GO:0005198">
    <property type="term" value="F:structural molecule activity"/>
    <property type="evidence" value="ECO:0007669"/>
    <property type="project" value="UniProtKB-UniRule"/>
</dbReference>
<dbReference type="GO" id="GO:0046718">
    <property type="term" value="P:symbiont entry into host cell"/>
    <property type="evidence" value="ECO:0007669"/>
    <property type="project" value="UniProtKB-KW"/>
</dbReference>
<dbReference type="GO" id="GO:0075732">
    <property type="term" value="P:viral penetration into host nucleus"/>
    <property type="evidence" value="ECO:0007669"/>
    <property type="project" value="UniProtKB-UniRule"/>
</dbReference>
<dbReference type="HAMAP" id="MF_04070">
    <property type="entry name" value="INFV_NCAP"/>
    <property type="match status" value="1"/>
</dbReference>
<dbReference type="InterPro" id="IPR002141">
    <property type="entry name" value="Flu_NP"/>
</dbReference>
<dbReference type="Pfam" id="PF00506">
    <property type="entry name" value="Flu_NP"/>
    <property type="match status" value="1"/>
</dbReference>
<dbReference type="SUPFAM" id="SSF161003">
    <property type="entry name" value="flu NP-like"/>
    <property type="match status" value="1"/>
</dbReference>
<reference key="1">
    <citation type="journal article" date="1993" name="J. Virol.">
        <title>Analysis of the evolution and variation of the human influenza A virus nucleoprotein gene from 1933 to 1990.</title>
        <authorList>
            <person name="Shu L.L."/>
            <person name="Bean W.J."/>
            <person name="Webster R.G."/>
        </authorList>
    </citation>
    <scope>NUCLEOTIDE SEQUENCE [GENOMIC RNA]</scope>
</reference>
<reference key="2">
    <citation type="submission" date="2005-12" db="EMBL/GenBank/DDBJ databases">
        <title>The NIAID influenza genome sequencing project.</title>
        <authorList>
            <person name="Ghedin E."/>
            <person name="Spiro D."/>
            <person name="Miller N."/>
            <person name="Zaborsky J."/>
            <person name="Feldblyum T."/>
            <person name="Subbu V."/>
            <person name="Shumway M."/>
            <person name="Sparenborg J."/>
            <person name="Groveman L."/>
            <person name="Halpin R."/>
            <person name="Sitz J."/>
            <person name="Koo H."/>
            <person name="Salzberg S.L."/>
            <person name="Webster R.G."/>
            <person name="Hoffmann E."/>
            <person name="Krauss S."/>
            <person name="Naeve C."/>
            <person name="Bao Y."/>
            <person name="Bolotov P."/>
            <person name="Dernovoy D."/>
            <person name="Kiryutin B."/>
            <person name="Lipman D.J."/>
            <person name="Tatusova T."/>
        </authorList>
    </citation>
    <scope>NUCLEOTIDE SEQUENCE [GENOMIC RNA]</scope>
</reference>
<gene>
    <name evidence="1" type="primary">NP</name>
</gene>
<organismHost>
    <name type="scientific">Aves</name>
    <dbReference type="NCBI Taxonomy" id="8782"/>
</organismHost>
<organismHost>
    <name type="scientific">Cetacea</name>
    <name type="common">whales</name>
    <dbReference type="NCBI Taxonomy" id="9721"/>
</organismHost>
<organismHost>
    <name type="scientific">Homo sapiens</name>
    <name type="common">Human</name>
    <dbReference type="NCBI Taxonomy" id="9606"/>
</organismHost>
<organismHost>
    <name type="scientific">Phocidae</name>
    <name type="common">true seals</name>
    <dbReference type="NCBI Taxonomy" id="9709"/>
</organismHost>
<organismHost>
    <name type="scientific">Sus scrofa</name>
    <name type="common">Pig</name>
    <dbReference type="NCBI Taxonomy" id="9823"/>
</organismHost>
<feature type="chain" id="PRO_0000079087" description="Nucleoprotein">
    <location>
        <begin position="1"/>
        <end position="498"/>
    </location>
</feature>
<feature type="region of interest" description="Disordered" evidence="2">
    <location>
        <begin position="1"/>
        <end position="21"/>
    </location>
</feature>
<feature type="short sequence motif" description="Unconventional nuclear localization signal" evidence="1">
    <location>
        <begin position="1"/>
        <end position="18"/>
    </location>
</feature>
<feature type="short sequence motif" description="Bipartite nuclear localization signal" evidence="1">
    <location>
        <begin position="198"/>
        <end position="216"/>
    </location>
</feature>
<feature type="compositionally biased region" description="Basic and acidic residues" evidence="2">
    <location>
        <begin position="8"/>
        <end position="21"/>
    </location>
</feature>
<feature type="sequence conflict" description="In Ref. 1; AAA51502." ref="1">
    <original>A</original>
    <variation>R</variation>
    <location>
        <position position="131"/>
    </location>
</feature>
<evidence type="ECO:0000255" key="1">
    <source>
        <dbReference type="HAMAP-Rule" id="MF_04070"/>
    </source>
</evidence>
<evidence type="ECO:0000256" key="2">
    <source>
        <dbReference type="SAM" id="MobiDB-lite"/>
    </source>
</evidence>
<proteinExistence type="inferred from homology"/>
<name>NCAP_I76A6</name>